<name>HSLU_FRATW</name>
<protein>
    <recommendedName>
        <fullName evidence="1">ATP-dependent protease ATPase subunit HslU</fullName>
    </recommendedName>
    <alternativeName>
        <fullName evidence="1">Unfoldase HslU</fullName>
    </alternativeName>
</protein>
<comment type="function">
    <text evidence="1">ATPase subunit of a proteasome-like degradation complex; this subunit has chaperone activity. The binding of ATP and its subsequent hydrolysis by HslU are essential for unfolding of protein substrates subsequently hydrolyzed by HslV. HslU recognizes the N-terminal part of its protein substrates and unfolds these before they are guided to HslV for hydrolysis.</text>
</comment>
<comment type="subunit">
    <text evidence="1">A double ring-shaped homohexamer of HslV is capped on each side by a ring-shaped HslU homohexamer. The assembly of the HslU/HslV complex is dependent on binding of ATP.</text>
</comment>
<comment type="subcellular location">
    <subcellularLocation>
        <location evidence="1">Cytoplasm</location>
    </subcellularLocation>
</comment>
<comment type="similarity">
    <text evidence="1">Belongs to the ClpX chaperone family. HslU subfamily.</text>
</comment>
<feature type="chain" id="PRO_1000012743" description="ATP-dependent protease ATPase subunit HslU">
    <location>
        <begin position="1"/>
        <end position="455"/>
    </location>
</feature>
<feature type="region of interest" description="Disordered" evidence="2">
    <location>
        <begin position="144"/>
        <end position="163"/>
    </location>
</feature>
<feature type="binding site" evidence="1">
    <location>
        <position position="19"/>
    </location>
    <ligand>
        <name>ATP</name>
        <dbReference type="ChEBI" id="CHEBI:30616"/>
    </ligand>
</feature>
<feature type="binding site" evidence="1">
    <location>
        <begin position="61"/>
        <end position="66"/>
    </location>
    <ligand>
        <name>ATP</name>
        <dbReference type="ChEBI" id="CHEBI:30616"/>
    </ligand>
</feature>
<feature type="binding site" evidence="1">
    <location>
        <position position="268"/>
    </location>
    <ligand>
        <name>ATP</name>
        <dbReference type="ChEBI" id="CHEBI:30616"/>
    </ligand>
</feature>
<feature type="binding site" evidence="1">
    <location>
        <position position="333"/>
    </location>
    <ligand>
        <name>ATP</name>
        <dbReference type="ChEBI" id="CHEBI:30616"/>
    </ligand>
</feature>
<feature type="binding site" evidence="1">
    <location>
        <position position="405"/>
    </location>
    <ligand>
        <name>ATP</name>
        <dbReference type="ChEBI" id="CHEBI:30616"/>
    </ligand>
</feature>
<sequence>MTQIMTPKTIVHELERHIIGQNDAKKAVAIALRNRWRRMQLDNEMRQEVTPKNILMIGPTGVGKTEIARRLAKLADAPFIKVEATKFTEVGYVGKDVESIIRDLVETAVKMKREEAKEKVTEKAARLAEDRILDVLIPPARTSESKVGFANEPAEDAASKKEKENKTREIFRKKIQNGELDDKEIEIEVAVAPKTIGVMGPPGMEDMTSQLQDLFSSLSTDKKKNKKMRIKDAIKLAQDEEAAKLVNEEDIKARALEAVEQNGIVFLDEIDKVCRKSSNSGADVSREGVQRDLLPLVEGSTVSTKYGVIKTDHILFIASGAFHVAKPSDLIPELQGRLPIRVELKSLEIEDFVRILREPDCSILKQYIALMKTEGIDLSFEEDAIRKIAEIAYKVNEEVENIGARRLHTVMERLLEKISFDAPELVEKNINITTDYVNEKLGNLVKNKDLSQYIL</sequence>
<accession>A4IY57</accession>
<proteinExistence type="inferred from homology"/>
<dbReference type="EMBL" id="CP000608">
    <property type="protein sequence ID" value="ABO46858.1"/>
    <property type="molecule type" value="Genomic_DNA"/>
</dbReference>
<dbReference type="RefSeq" id="WP_003015770.1">
    <property type="nucleotide sequence ID" value="NC_009257.1"/>
</dbReference>
<dbReference type="SMR" id="A4IY57"/>
<dbReference type="KEGG" id="ftw:FTW_1039"/>
<dbReference type="HOGENOM" id="CLU_033123_0_0_6"/>
<dbReference type="GO" id="GO:0009376">
    <property type="term" value="C:HslUV protease complex"/>
    <property type="evidence" value="ECO:0007669"/>
    <property type="project" value="UniProtKB-UniRule"/>
</dbReference>
<dbReference type="GO" id="GO:0005524">
    <property type="term" value="F:ATP binding"/>
    <property type="evidence" value="ECO:0007669"/>
    <property type="project" value="UniProtKB-UniRule"/>
</dbReference>
<dbReference type="GO" id="GO:0016887">
    <property type="term" value="F:ATP hydrolysis activity"/>
    <property type="evidence" value="ECO:0007669"/>
    <property type="project" value="InterPro"/>
</dbReference>
<dbReference type="GO" id="GO:0008233">
    <property type="term" value="F:peptidase activity"/>
    <property type="evidence" value="ECO:0007669"/>
    <property type="project" value="InterPro"/>
</dbReference>
<dbReference type="GO" id="GO:0036402">
    <property type="term" value="F:proteasome-activating activity"/>
    <property type="evidence" value="ECO:0007669"/>
    <property type="project" value="UniProtKB-UniRule"/>
</dbReference>
<dbReference type="GO" id="GO:0043335">
    <property type="term" value="P:protein unfolding"/>
    <property type="evidence" value="ECO:0007669"/>
    <property type="project" value="UniProtKB-UniRule"/>
</dbReference>
<dbReference type="GO" id="GO:0051603">
    <property type="term" value="P:proteolysis involved in protein catabolic process"/>
    <property type="evidence" value="ECO:0007669"/>
    <property type="project" value="TreeGrafter"/>
</dbReference>
<dbReference type="CDD" id="cd19498">
    <property type="entry name" value="RecA-like_HslU"/>
    <property type="match status" value="1"/>
</dbReference>
<dbReference type="FunFam" id="3.40.50.300:FF:000213">
    <property type="entry name" value="ATP-dependent protease ATPase subunit HslU"/>
    <property type="match status" value="1"/>
</dbReference>
<dbReference type="FunFam" id="3.40.50.300:FF:000220">
    <property type="entry name" value="ATP-dependent protease ATPase subunit HslU"/>
    <property type="match status" value="1"/>
</dbReference>
<dbReference type="Gene3D" id="1.10.8.60">
    <property type="match status" value="1"/>
</dbReference>
<dbReference type="Gene3D" id="3.40.50.300">
    <property type="entry name" value="P-loop containing nucleotide triphosphate hydrolases"/>
    <property type="match status" value="2"/>
</dbReference>
<dbReference type="HAMAP" id="MF_00249">
    <property type="entry name" value="HslU"/>
    <property type="match status" value="1"/>
</dbReference>
<dbReference type="InterPro" id="IPR003593">
    <property type="entry name" value="AAA+_ATPase"/>
</dbReference>
<dbReference type="InterPro" id="IPR050052">
    <property type="entry name" value="ATP-dep_Clp_protease_ClpX"/>
</dbReference>
<dbReference type="InterPro" id="IPR003959">
    <property type="entry name" value="ATPase_AAA_core"/>
</dbReference>
<dbReference type="InterPro" id="IPR019489">
    <property type="entry name" value="Clp_ATPase_C"/>
</dbReference>
<dbReference type="InterPro" id="IPR004491">
    <property type="entry name" value="HslU"/>
</dbReference>
<dbReference type="InterPro" id="IPR027417">
    <property type="entry name" value="P-loop_NTPase"/>
</dbReference>
<dbReference type="NCBIfam" id="TIGR00390">
    <property type="entry name" value="hslU"/>
    <property type="match status" value="1"/>
</dbReference>
<dbReference type="NCBIfam" id="NF003544">
    <property type="entry name" value="PRK05201.1"/>
    <property type="match status" value="1"/>
</dbReference>
<dbReference type="PANTHER" id="PTHR48102">
    <property type="entry name" value="ATP-DEPENDENT CLP PROTEASE ATP-BINDING SUBUNIT CLPX-LIKE, MITOCHONDRIAL-RELATED"/>
    <property type="match status" value="1"/>
</dbReference>
<dbReference type="PANTHER" id="PTHR48102:SF3">
    <property type="entry name" value="ATP-DEPENDENT PROTEASE ATPASE SUBUNIT HSLU"/>
    <property type="match status" value="1"/>
</dbReference>
<dbReference type="Pfam" id="PF00004">
    <property type="entry name" value="AAA"/>
    <property type="match status" value="1"/>
</dbReference>
<dbReference type="Pfam" id="PF07724">
    <property type="entry name" value="AAA_2"/>
    <property type="match status" value="1"/>
</dbReference>
<dbReference type="SMART" id="SM00382">
    <property type="entry name" value="AAA"/>
    <property type="match status" value="1"/>
</dbReference>
<dbReference type="SMART" id="SM01086">
    <property type="entry name" value="ClpB_D2-small"/>
    <property type="match status" value="1"/>
</dbReference>
<dbReference type="SUPFAM" id="SSF52540">
    <property type="entry name" value="P-loop containing nucleoside triphosphate hydrolases"/>
    <property type="match status" value="1"/>
</dbReference>
<keyword id="KW-0067">ATP-binding</keyword>
<keyword id="KW-0143">Chaperone</keyword>
<keyword id="KW-0963">Cytoplasm</keyword>
<keyword id="KW-0547">Nucleotide-binding</keyword>
<keyword id="KW-0346">Stress response</keyword>
<reference key="1">
    <citation type="journal article" date="2007" name="PLoS ONE">
        <title>Complete genomic characterization of a pathogenic A.II strain of Francisella tularensis subspecies tularensis.</title>
        <authorList>
            <person name="Beckstrom-Sternberg S.M."/>
            <person name="Auerbach R.K."/>
            <person name="Godbole S."/>
            <person name="Pearson J.V."/>
            <person name="Beckstrom-Sternberg J.S."/>
            <person name="Deng Z."/>
            <person name="Munk C."/>
            <person name="Kubota K."/>
            <person name="Zhou Y."/>
            <person name="Bruce D."/>
            <person name="Noronha J."/>
            <person name="Scheuermann R.H."/>
            <person name="Wang A."/>
            <person name="Wei X."/>
            <person name="Wang J."/>
            <person name="Hao J."/>
            <person name="Wagner D.M."/>
            <person name="Brettin T.S."/>
            <person name="Brown N."/>
            <person name="Gilna P."/>
            <person name="Keim P.S."/>
        </authorList>
    </citation>
    <scope>NUCLEOTIDE SEQUENCE [LARGE SCALE GENOMIC DNA]</scope>
    <source>
        <strain>WY96-3418</strain>
    </source>
</reference>
<organism>
    <name type="scientific">Francisella tularensis subsp. tularensis (strain WY96-3418)</name>
    <dbReference type="NCBI Taxonomy" id="418136"/>
    <lineage>
        <taxon>Bacteria</taxon>
        <taxon>Pseudomonadati</taxon>
        <taxon>Pseudomonadota</taxon>
        <taxon>Gammaproteobacteria</taxon>
        <taxon>Thiotrichales</taxon>
        <taxon>Francisellaceae</taxon>
        <taxon>Francisella</taxon>
    </lineage>
</organism>
<gene>
    <name evidence="1" type="primary">hslU</name>
    <name type="ordered locus">FTW_1039</name>
</gene>
<evidence type="ECO:0000255" key="1">
    <source>
        <dbReference type="HAMAP-Rule" id="MF_00249"/>
    </source>
</evidence>
<evidence type="ECO:0000256" key="2">
    <source>
        <dbReference type="SAM" id="MobiDB-lite"/>
    </source>
</evidence>